<name>PP14D_RAT</name>
<feature type="chain" id="PRO_0000071499" description="Protein phosphatase 1 regulatory subunit 14D">
    <location>
        <begin position="1"/>
        <end position="146"/>
    </location>
</feature>
<feature type="region of interest" description="Disordered" evidence="2">
    <location>
        <begin position="1"/>
        <end position="57"/>
    </location>
</feature>
<feature type="region of interest" description="Interaction with protein phosphatase 1" evidence="1">
    <location>
        <begin position="21"/>
        <end position="25"/>
    </location>
</feature>
<feature type="compositionally biased region" description="Polar residues" evidence="2">
    <location>
        <begin position="1"/>
        <end position="16"/>
    </location>
</feature>
<feature type="compositionally biased region" description="Basic and acidic residues" evidence="2">
    <location>
        <begin position="18"/>
        <end position="28"/>
    </location>
</feature>
<feature type="compositionally biased region" description="Basic and acidic residues" evidence="2">
    <location>
        <begin position="38"/>
        <end position="48"/>
    </location>
</feature>
<keyword id="KW-0963">Cytoplasm</keyword>
<keyword id="KW-0597">Phosphoprotein</keyword>
<keyword id="KW-0650">Protein phosphatase inhibitor</keyword>
<keyword id="KW-1185">Reference proteome</keyword>
<accession>Q8K3F4</accession>
<protein>
    <recommendedName>
        <fullName>Protein phosphatase 1 regulatory subunit 14D</fullName>
    </recommendedName>
    <alternativeName>
        <fullName>Gastrointestinal and brain-specific PP1-inhibitory protein 1</fullName>
        <shortName>GBPI-1</shortName>
    </alternativeName>
</protein>
<comment type="function">
    <text evidence="1">Inhibitor of PPP1CA. Has inhibitory activity only when phosphorylated, creating a molecular switch for regulating the phosphorylation status of PPP1CA substrates and smooth muscle contraction (By similarity).</text>
</comment>
<comment type="subcellular location">
    <subcellularLocation>
        <location evidence="3">Cytoplasm</location>
    </subcellularLocation>
</comment>
<comment type="PTM">
    <text evidence="1">Phosphorylated on several residues.</text>
</comment>
<comment type="similarity">
    <text evidence="3">Belongs to the PP1 inhibitor family.</text>
</comment>
<proteinExistence type="evidence at transcript level"/>
<organism>
    <name type="scientific">Rattus norvegicus</name>
    <name type="common">Rat</name>
    <dbReference type="NCBI Taxonomy" id="10116"/>
    <lineage>
        <taxon>Eukaryota</taxon>
        <taxon>Metazoa</taxon>
        <taxon>Chordata</taxon>
        <taxon>Craniata</taxon>
        <taxon>Vertebrata</taxon>
        <taxon>Euteleostomi</taxon>
        <taxon>Mammalia</taxon>
        <taxon>Eutheria</taxon>
        <taxon>Euarchontoglires</taxon>
        <taxon>Glires</taxon>
        <taxon>Rodentia</taxon>
        <taxon>Myomorpha</taxon>
        <taxon>Muroidea</taxon>
        <taxon>Muridae</taxon>
        <taxon>Murinae</taxon>
        <taxon>Rattus</taxon>
    </lineage>
</organism>
<gene>
    <name type="primary">Ppp1r14d</name>
    <name type="synonym">Gbpi</name>
</gene>
<sequence length="146" mass="16867">MLSSSAASCTSPNPDTDNPDKKVRWSSEKRRRASSTDSESKTHLDISKLPRSRRPSRLTVKYDRGHLQRWLEMEQWVDAQVQELFQGQADTSEPEIDLEALMELSTDEQRTQLEAILQDCPGNREPFISELLSQLKRLRRLSRPSK</sequence>
<evidence type="ECO:0000250" key="1"/>
<evidence type="ECO:0000256" key="2">
    <source>
        <dbReference type="SAM" id="MobiDB-lite"/>
    </source>
</evidence>
<evidence type="ECO:0000305" key="3"/>
<reference key="1">
    <citation type="journal article" date="2004" name="Biochem. J.">
        <title>GBPI, a novel gastrointestinal- and brain-specific PP1-inhibitory protein, is activated by PKC and inactivated by PKA.</title>
        <authorList>
            <person name="Liu Q.-R."/>
            <person name="Zhang P.-W."/>
            <person name="Lin Z."/>
            <person name="Li Q.-F."/>
            <person name="Woods A.S."/>
            <person name="Troncoso J."/>
            <person name="Uhl G.R."/>
        </authorList>
    </citation>
    <scope>NUCLEOTIDE SEQUENCE [MRNA]</scope>
    <source>
        <strain>Sprague-Dawley</strain>
    </source>
</reference>
<dbReference type="EMBL" id="AY122322">
    <property type="protein sequence ID" value="AAM89291.1"/>
    <property type="molecule type" value="mRNA"/>
</dbReference>
<dbReference type="RefSeq" id="NP_742008.1">
    <property type="nucleotide sequence ID" value="NM_172011.2"/>
</dbReference>
<dbReference type="FunCoup" id="Q8K3F4">
    <property type="interactions" value="1"/>
</dbReference>
<dbReference type="STRING" id="10116.ENSRNOP00000017070"/>
<dbReference type="PhosphoSitePlus" id="Q8K3F4"/>
<dbReference type="PaxDb" id="10116-ENSRNOP00000017070"/>
<dbReference type="GeneID" id="259226"/>
<dbReference type="KEGG" id="rno:259226"/>
<dbReference type="UCSC" id="RGD:628891">
    <property type="organism name" value="rat"/>
</dbReference>
<dbReference type="AGR" id="RGD:628891"/>
<dbReference type="CTD" id="54866"/>
<dbReference type="RGD" id="628891">
    <property type="gene designation" value="Ppp1r14d"/>
</dbReference>
<dbReference type="VEuPathDB" id="HostDB:ENSRNOG00000012648"/>
<dbReference type="eggNOG" id="ENOG502RZZY">
    <property type="taxonomic scope" value="Eukaryota"/>
</dbReference>
<dbReference type="HOGENOM" id="CLU_114155_0_0_1"/>
<dbReference type="InParanoid" id="Q8K3F4"/>
<dbReference type="OrthoDB" id="73091at9989"/>
<dbReference type="PhylomeDB" id="Q8K3F4"/>
<dbReference type="TreeFam" id="TF105546"/>
<dbReference type="PRO" id="PR:Q8K3F4"/>
<dbReference type="Proteomes" id="UP000002494">
    <property type="component" value="Chromosome 3"/>
</dbReference>
<dbReference type="Bgee" id="ENSRNOG00000012648">
    <property type="expression patterns" value="Expressed in duodenum and 14 other cell types or tissues"/>
</dbReference>
<dbReference type="ExpressionAtlas" id="Q8K3F4">
    <property type="expression patterns" value="baseline"/>
</dbReference>
<dbReference type="GO" id="GO:0005737">
    <property type="term" value="C:cytoplasm"/>
    <property type="evidence" value="ECO:0007669"/>
    <property type="project" value="UniProtKB-SubCell"/>
</dbReference>
<dbReference type="GO" id="GO:0004865">
    <property type="term" value="F:protein serine/threonine phosphatase inhibitor activity"/>
    <property type="evidence" value="ECO:0000250"/>
    <property type="project" value="UniProtKB"/>
</dbReference>
<dbReference type="FunFam" id="1.10.150.220:FF:000003">
    <property type="entry name" value="protein phosphatase 1 regulatory subunit 14D"/>
    <property type="match status" value="1"/>
</dbReference>
<dbReference type="Gene3D" id="1.10.150.220">
    <property type="entry name" value="CPI-17"/>
    <property type="match status" value="1"/>
</dbReference>
<dbReference type="InterPro" id="IPR008025">
    <property type="entry name" value="CPI-17"/>
</dbReference>
<dbReference type="InterPro" id="IPR036658">
    <property type="entry name" value="CPI-17_sf"/>
</dbReference>
<dbReference type="PANTHER" id="PTHR16188">
    <property type="entry name" value="PROTEIN PHOSPHATASE 1 INHIBITOR POTENTIATED BY PROTEIN KINASE C"/>
    <property type="match status" value="1"/>
</dbReference>
<dbReference type="PANTHER" id="PTHR16188:SF13">
    <property type="entry name" value="PROTEIN PHOSPHATASE 1 REGULATORY SUBUNIT 14D"/>
    <property type="match status" value="1"/>
</dbReference>
<dbReference type="Pfam" id="PF05361">
    <property type="entry name" value="PP1_inhibitor"/>
    <property type="match status" value="1"/>
</dbReference>
<dbReference type="SUPFAM" id="SSF81790">
    <property type="entry name" value="Myosin phosphatase inhibitor 17kDa protein, CPI-17"/>
    <property type="match status" value="1"/>
</dbReference>